<name>UBPA_DICDI</name>
<evidence type="ECO:0000255" key="1">
    <source>
        <dbReference type="PROSITE-ProRule" id="PRU00212"/>
    </source>
</evidence>
<evidence type="ECO:0000255" key="2">
    <source>
        <dbReference type="PROSITE-ProRule" id="PRU00502"/>
    </source>
</evidence>
<evidence type="ECO:0000255" key="3">
    <source>
        <dbReference type="PROSITE-ProRule" id="PRU10092"/>
    </source>
</evidence>
<evidence type="ECO:0000255" key="4">
    <source>
        <dbReference type="PROSITE-ProRule" id="PRU10093"/>
    </source>
</evidence>
<evidence type="ECO:0000256" key="5">
    <source>
        <dbReference type="SAM" id="MobiDB-lite"/>
    </source>
</evidence>
<evidence type="ECO:0000269" key="6">
    <source>
    </source>
</evidence>
<evidence type="ECO:0000305" key="7"/>
<keyword id="KW-0378">Hydrolase</keyword>
<keyword id="KW-0479">Metal-binding</keyword>
<keyword id="KW-0645">Protease</keyword>
<keyword id="KW-1185">Reference proteome</keyword>
<keyword id="KW-0677">Repeat</keyword>
<keyword id="KW-0788">Thiol protease</keyword>
<keyword id="KW-0833">Ubl conjugation pathway</keyword>
<keyword id="KW-0862">Zinc</keyword>
<keyword id="KW-0863">Zinc-finger</keyword>
<accession>P54201</accession>
<accession>Q54EP2</accession>
<proteinExistence type="evidence at transcript level"/>
<protein>
    <recommendedName>
        <fullName>Ubiquitin carboxyl-terminal hydrolase A</fullName>
        <ecNumber>3.4.19.12</ecNumber>
    </recommendedName>
    <alternativeName>
        <fullName>Deubiquitinating enzyme A</fullName>
    </alternativeName>
    <alternativeName>
        <fullName>Ubiquitin thioesterase A</fullName>
    </alternativeName>
    <alternativeName>
        <fullName>Ubiquitin-specific-processing protease A</fullName>
    </alternativeName>
</protein>
<comment type="function">
    <text evidence="6">Required for development but not growth.</text>
</comment>
<comment type="catalytic activity">
    <reaction>
        <text>Thiol-dependent hydrolysis of ester, thioester, amide, peptide and isopeptide bonds formed by the C-terminal Gly of ubiquitin (a 76-residue protein attached to proteins as an intracellular targeting signal).</text>
        <dbReference type="EC" id="3.4.19.12"/>
    </reaction>
</comment>
<comment type="similarity">
    <text evidence="7">Belongs to the peptidase C19 family.</text>
</comment>
<comment type="sequence caution" evidence="7">
    <conflict type="erroneous gene model prediction">
        <sequence resource="EMBL-CDS" id="EAL61603"/>
    </conflict>
</comment>
<feature type="chain" id="PRO_0000080686" description="Ubiquitin carboxyl-terminal hydrolase A">
    <location>
        <begin position="1"/>
        <end position="837"/>
    </location>
</feature>
<feature type="domain" description="USP">
    <location>
        <begin position="319"/>
        <end position="835"/>
    </location>
</feature>
<feature type="domain" description="UBA 1" evidence="1">
    <location>
        <begin position="628"/>
        <end position="669"/>
    </location>
</feature>
<feature type="domain" description="UBA 2" evidence="1">
    <location>
        <begin position="700"/>
        <end position="740"/>
    </location>
</feature>
<feature type="zinc finger region" description="UBP-type; degenerate" evidence="2">
    <location>
        <begin position="166"/>
        <end position="277"/>
    </location>
</feature>
<feature type="region of interest" description="Disordered" evidence="5">
    <location>
        <begin position="676"/>
        <end position="695"/>
    </location>
</feature>
<feature type="compositionally biased region" description="Low complexity" evidence="5">
    <location>
        <begin position="683"/>
        <end position="695"/>
    </location>
</feature>
<feature type="active site" description="Nucleophile" evidence="3 4">
    <location>
        <position position="328"/>
    </location>
</feature>
<feature type="active site" description="Proton acceptor" evidence="3 4">
    <location>
        <position position="797"/>
    </location>
</feature>
<feature type="sequence conflict" description="In Ref. 1; AAC71068." evidence="7" ref="1">
    <original>T</original>
    <variation>N</variation>
    <location>
        <position position="180"/>
    </location>
</feature>
<feature type="sequence conflict" description="In Ref. 1; AAC71068." evidence="7" ref="1">
    <original>N</original>
    <variation>I</variation>
    <location>
        <position position="683"/>
    </location>
</feature>
<organism>
    <name type="scientific">Dictyostelium discoideum</name>
    <name type="common">Social amoeba</name>
    <dbReference type="NCBI Taxonomy" id="44689"/>
    <lineage>
        <taxon>Eukaryota</taxon>
        <taxon>Amoebozoa</taxon>
        <taxon>Evosea</taxon>
        <taxon>Eumycetozoa</taxon>
        <taxon>Dictyostelia</taxon>
        <taxon>Dictyosteliales</taxon>
        <taxon>Dictyosteliaceae</taxon>
        <taxon>Dictyostelium</taxon>
    </lineage>
</organism>
<dbReference type="EC" id="3.4.19.12"/>
<dbReference type="EMBL" id="U48271">
    <property type="protein sequence ID" value="AAC71068.1"/>
    <property type="molecule type" value="mRNA"/>
</dbReference>
<dbReference type="EMBL" id="AAFI02000177">
    <property type="protein sequence ID" value="EAL61603.2"/>
    <property type="status" value="ALT_SEQ"/>
    <property type="molecule type" value="Genomic_DNA"/>
</dbReference>
<dbReference type="RefSeq" id="XP_635198.2">
    <property type="nucleotide sequence ID" value="XM_630106.2"/>
</dbReference>
<dbReference type="SMR" id="P54201"/>
<dbReference type="FunCoup" id="P54201">
    <property type="interactions" value="1347"/>
</dbReference>
<dbReference type="STRING" id="44689.P54201"/>
<dbReference type="MEROPS" id="C19.104"/>
<dbReference type="PaxDb" id="44689-DDB0231492"/>
<dbReference type="EnsemblProtists" id="EAL61603">
    <property type="protein sequence ID" value="EAL61603"/>
    <property type="gene ID" value="DDB_G0291239"/>
</dbReference>
<dbReference type="GeneID" id="8628143"/>
<dbReference type="KEGG" id="ddi:DDB_G0291239"/>
<dbReference type="dictyBase" id="DDB_G0291239">
    <property type="gene designation" value="ubpA"/>
</dbReference>
<dbReference type="VEuPathDB" id="AmoebaDB:DDB_G0291239"/>
<dbReference type="eggNOG" id="KOG0944">
    <property type="taxonomic scope" value="Eukaryota"/>
</dbReference>
<dbReference type="InParanoid" id="P54201"/>
<dbReference type="PhylomeDB" id="P54201"/>
<dbReference type="Reactome" id="R-DDI-5689880">
    <property type="pathway name" value="Ub-specific processing proteases"/>
</dbReference>
<dbReference type="Reactome" id="R-DDI-8866652">
    <property type="pathway name" value="Synthesis of active ubiquitin: roles of E1 and E2 enzymes"/>
</dbReference>
<dbReference type="Reactome" id="R-DDI-8948751">
    <property type="pathway name" value="Regulation of PTEN stability and activity"/>
</dbReference>
<dbReference type="PRO" id="PR:P54201"/>
<dbReference type="Proteomes" id="UP000002195">
    <property type="component" value="Chromosome 6"/>
</dbReference>
<dbReference type="GO" id="GO:0005737">
    <property type="term" value="C:cytoplasm"/>
    <property type="evidence" value="ECO:0000304"/>
    <property type="project" value="dictyBase"/>
</dbReference>
<dbReference type="GO" id="GO:0005829">
    <property type="term" value="C:cytosol"/>
    <property type="evidence" value="ECO:0000318"/>
    <property type="project" value="GO_Central"/>
</dbReference>
<dbReference type="GO" id="GO:0005634">
    <property type="term" value="C:nucleus"/>
    <property type="evidence" value="ECO:0000318"/>
    <property type="project" value="GO_Central"/>
</dbReference>
<dbReference type="GO" id="GO:0004843">
    <property type="term" value="F:cysteine-type deubiquitinase activity"/>
    <property type="evidence" value="ECO:0000314"/>
    <property type="project" value="dictyBase"/>
</dbReference>
<dbReference type="GO" id="GO:0008270">
    <property type="term" value="F:zinc ion binding"/>
    <property type="evidence" value="ECO:0007669"/>
    <property type="project" value="UniProtKB-KW"/>
</dbReference>
<dbReference type="GO" id="GO:0140676">
    <property type="term" value="P:oscillatory cAMP signaling"/>
    <property type="evidence" value="ECO:0000315"/>
    <property type="project" value="dictyBase"/>
</dbReference>
<dbReference type="GO" id="GO:0010628">
    <property type="term" value="P:positive regulation of gene expression"/>
    <property type="evidence" value="ECO:0000315"/>
    <property type="project" value="dictyBase"/>
</dbReference>
<dbReference type="GO" id="GO:0016579">
    <property type="term" value="P:protein deubiquitination"/>
    <property type="evidence" value="ECO:0000315"/>
    <property type="project" value="dictyBase"/>
</dbReference>
<dbReference type="GO" id="GO:0006508">
    <property type="term" value="P:proteolysis"/>
    <property type="evidence" value="ECO:0007669"/>
    <property type="project" value="UniProtKB-KW"/>
</dbReference>
<dbReference type="GO" id="GO:0031647">
    <property type="term" value="P:regulation of protein stability"/>
    <property type="evidence" value="ECO:0000318"/>
    <property type="project" value="GO_Central"/>
</dbReference>
<dbReference type="GO" id="GO:0030587">
    <property type="term" value="P:sorocarp development"/>
    <property type="evidence" value="ECO:0000315"/>
    <property type="project" value="dictyBase"/>
</dbReference>
<dbReference type="CDD" id="cd02658">
    <property type="entry name" value="Peptidase_C19B"/>
    <property type="match status" value="1"/>
</dbReference>
<dbReference type="CDD" id="cd14385">
    <property type="entry name" value="UBA1_spUBP14_like"/>
    <property type="match status" value="1"/>
</dbReference>
<dbReference type="CDD" id="cd14386">
    <property type="entry name" value="UBA2_UBP5"/>
    <property type="match status" value="1"/>
</dbReference>
<dbReference type="FunFam" id="1.10.8.10:FF:000103">
    <property type="entry name" value="Ubiquitin carboxyl-terminal hydrolase"/>
    <property type="match status" value="1"/>
</dbReference>
<dbReference type="FunFam" id="3.30.40.10:FF:000026">
    <property type="entry name" value="Ubiquitin carboxyl-terminal hydrolase"/>
    <property type="match status" value="1"/>
</dbReference>
<dbReference type="FunFam" id="3.30.40.10:FF:001146">
    <property type="entry name" value="Ubiquitin carboxyl-terminal hydrolase"/>
    <property type="match status" value="1"/>
</dbReference>
<dbReference type="FunFam" id="3.90.70.10:FF:000099">
    <property type="entry name" value="Ubiquitin carboxyl-terminal hydrolase"/>
    <property type="match status" value="1"/>
</dbReference>
<dbReference type="Gene3D" id="3.90.70.10">
    <property type="entry name" value="Cysteine proteinases"/>
    <property type="match status" value="1"/>
</dbReference>
<dbReference type="Gene3D" id="1.10.8.10">
    <property type="entry name" value="DNA helicase RuvA subunit, C-terminal domain"/>
    <property type="match status" value="2"/>
</dbReference>
<dbReference type="Gene3D" id="3.30.40.10">
    <property type="entry name" value="Zinc/RING finger domain, C3HC4 (zinc finger)"/>
    <property type="match status" value="2"/>
</dbReference>
<dbReference type="InterPro" id="IPR038765">
    <property type="entry name" value="Papain-like_cys_pep_sf"/>
</dbReference>
<dbReference type="InterPro" id="IPR050164">
    <property type="entry name" value="Peptidase_C19"/>
</dbReference>
<dbReference type="InterPro" id="IPR001394">
    <property type="entry name" value="Peptidase_C19_UCH"/>
</dbReference>
<dbReference type="InterPro" id="IPR015940">
    <property type="entry name" value="UBA"/>
</dbReference>
<dbReference type="InterPro" id="IPR009060">
    <property type="entry name" value="UBA-like_sf"/>
</dbReference>
<dbReference type="InterPro" id="IPR016652">
    <property type="entry name" value="Ubiquitinyl_hydrolase"/>
</dbReference>
<dbReference type="InterPro" id="IPR041432">
    <property type="entry name" value="UBP13_Znf-UBP_var"/>
</dbReference>
<dbReference type="InterPro" id="IPR018200">
    <property type="entry name" value="USP_CS"/>
</dbReference>
<dbReference type="InterPro" id="IPR028889">
    <property type="entry name" value="USP_dom"/>
</dbReference>
<dbReference type="InterPro" id="IPR013083">
    <property type="entry name" value="Znf_RING/FYVE/PHD"/>
</dbReference>
<dbReference type="InterPro" id="IPR001607">
    <property type="entry name" value="Znf_UBP"/>
</dbReference>
<dbReference type="PANTHER" id="PTHR24006">
    <property type="entry name" value="UBIQUITIN CARBOXYL-TERMINAL HYDROLASE"/>
    <property type="match status" value="1"/>
</dbReference>
<dbReference type="PANTHER" id="PTHR24006:SF664">
    <property type="entry name" value="UBIQUITIN CARBOXYL-TERMINAL HYDROLASE"/>
    <property type="match status" value="1"/>
</dbReference>
<dbReference type="Pfam" id="PF00627">
    <property type="entry name" value="UBA"/>
    <property type="match status" value="1"/>
</dbReference>
<dbReference type="Pfam" id="PF22562">
    <property type="entry name" value="UBA_7"/>
    <property type="match status" value="1"/>
</dbReference>
<dbReference type="Pfam" id="PF00443">
    <property type="entry name" value="UCH"/>
    <property type="match status" value="1"/>
</dbReference>
<dbReference type="Pfam" id="PF02148">
    <property type="entry name" value="zf-UBP"/>
    <property type="match status" value="1"/>
</dbReference>
<dbReference type="Pfam" id="PF17807">
    <property type="entry name" value="zf-UBP_var"/>
    <property type="match status" value="1"/>
</dbReference>
<dbReference type="PIRSF" id="PIRSF016308">
    <property type="entry name" value="UBP"/>
    <property type="match status" value="1"/>
</dbReference>
<dbReference type="SMART" id="SM00165">
    <property type="entry name" value="UBA"/>
    <property type="match status" value="2"/>
</dbReference>
<dbReference type="SMART" id="SM00290">
    <property type="entry name" value="ZnF_UBP"/>
    <property type="match status" value="1"/>
</dbReference>
<dbReference type="SUPFAM" id="SSF54001">
    <property type="entry name" value="Cysteine proteinases"/>
    <property type="match status" value="1"/>
</dbReference>
<dbReference type="SUPFAM" id="SSF57850">
    <property type="entry name" value="RING/U-box"/>
    <property type="match status" value="1"/>
</dbReference>
<dbReference type="SUPFAM" id="SSF46934">
    <property type="entry name" value="UBA-like"/>
    <property type="match status" value="1"/>
</dbReference>
<dbReference type="PROSITE" id="PS50030">
    <property type="entry name" value="UBA"/>
    <property type="match status" value="2"/>
</dbReference>
<dbReference type="PROSITE" id="PS00972">
    <property type="entry name" value="USP_1"/>
    <property type="match status" value="1"/>
</dbReference>
<dbReference type="PROSITE" id="PS00973">
    <property type="entry name" value="USP_2"/>
    <property type="match status" value="1"/>
</dbReference>
<dbReference type="PROSITE" id="PS50235">
    <property type="entry name" value="USP_3"/>
    <property type="match status" value="1"/>
</dbReference>
<dbReference type="PROSITE" id="PS50271">
    <property type="entry name" value="ZF_UBP"/>
    <property type="match status" value="1"/>
</dbReference>
<reference key="1">
    <citation type="journal article" date="1998" name="J. Biol. Chem.">
        <title>A deubiquitinating enzyme that disassembles free polyubiquitin chains is required for development but not growth in Dictyostelium.</title>
        <authorList>
            <person name="Lindsey D.F."/>
            <person name="Amerik A."/>
            <person name="Deery W.J."/>
            <person name="Bishop J.D."/>
            <person name="Hochstrasser M."/>
            <person name="Gomer R.H."/>
        </authorList>
    </citation>
    <scope>NUCLEOTIDE SEQUENCE [MRNA]</scope>
    <scope>FUNCTION</scope>
</reference>
<reference key="2">
    <citation type="journal article" date="2005" name="Nature">
        <title>The genome of the social amoeba Dictyostelium discoideum.</title>
        <authorList>
            <person name="Eichinger L."/>
            <person name="Pachebat J.A."/>
            <person name="Gloeckner G."/>
            <person name="Rajandream M.A."/>
            <person name="Sucgang R."/>
            <person name="Berriman M."/>
            <person name="Song J."/>
            <person name="Olsen R."/>
            <person name="Szafranski K."/>
            <person name="Xu Q."/>
            <person name="Tunggal B."/>
            <person name="Kummerfeld S."/>
            <person name="Madera M."/>
            <person name="Konfortov B.A."/>
            <person name="Rivero F."/>
            <person name="Bankier A.T."/>
            <person name="Lehmann R."/>
            <person name="Hamlin N."/>
            <person name="Davies R."/>
            <person name="Gaudet P."/>
            <person name="Fey P."/>
            <person name="Pilcher K."/>
            <person name="Chen G."/>
            <person name="Saunders D."/>
            <person name="Sodergren E.J."/>
            <person name="Davis P."/>
            <person name="Kerhornou A."/>
            <person name="Nie X."/>
            <person name="Hall N."/>
            <person name="Anjard C."/>
            <person name="Hemphill L."/>
            <person name="Bason N."/>
            <person name="Farbrother P."/>
            <person name="Desany B."/>
            <person name="Just E."/>
            <person name="Morio T."/>
            <person name="Rost R."/>
            <person name="Churcher C.M."/>
            <person name="Cooper J."/>
            <person name="Haydock S."/>
            <person name="van Driessche N."/>
            <person name="Cronin A."/>
            <person name="Goodhead I."/>
            <person name="Muzny D.M."/>
            <person name="Mourier T."/>
            <person name="Pain A."/>
            <person name="Lu M."/>
            <person name="Harper D."/>
            <person name="Lindsay R."/>
            <person name="Hauser H."/>
            <person name="James K.D."/>
            <person name="Quiles M."/>
            <person name="Madan Babu M."/>
            <person name="Saito T."/>
            <person name="Buchrieser C."/>
            <person name="Wardroper A."/>
            <person name="Felder M."/>
            <person name="Thangavelu M."/>
            <person name="Johnson D."/>
            <person name="Knights A."/>
            <person name="Loulseged H."/>
            <person name="Mungall K.L."/>
            <person name="Oliver K."/>
            <person name="Price C."/>
            <person name="Quail M.A."/>
            <person name="Urushihara H."/>
            <person name="Hernandez J."/>
            <person name="Rabbinowitsch E."/>
            <person name="Steffen D."/>
            <person name="Sanders M."/>
            <person name="Ma J."/>
            <person name="Kohara Y."/>
            <person name="Sharp S."/>
            <person name="Simmonds M.N."/>
            <person name="Spiegler S."/>
            <person name="Tivey A."/>
            <person name="Sugano S."/>
            <person name="White B."/>
            <person name="Walker D."/>
            <person name="Woodward J.R."/>
            <person name="Winckler T."/>
            <person name="Tanaka Y."/>
            <person name="Shaulsky G."/>
            <person name="Schleicher M."/>
            <person name="Weinstock G.M."/>
            <person name="Rosenthal A."/>
            <person name="Cox E.C."/>
            <person name="Chisholm R.L."/>
            <person name="Gibbs R.A."/>
            <person name="Loomis W.F."/>
            <person name="Platzer M."/>
            <person name="Kay R.R."/>
            <person name="Williams J.G."/>
            <person name="Dear P.H."/>
            <person name="Noegel A.A."/>
            <person name="Barrell B.G."/>
            <person name="Kuspa A."/>
        </authorList>
    </citation>
    <scope>NUCLEOTIDE SEQUENCE [LARGE SCALE GENOMIC DNA]</scope>
    <source>
        <strain>AX4</strain>
    </source>
</reference>
<gene>
    <name type="primary">ubpA</name>
    <name type="synonym">usp5</name>
    <name type="ORF">DDB_G0291239</name>
</gene>
<sequence>MELFPELKNIKVPTEKSRLWKDECCYCFDTPENGEGLFIDLIGLLAFSKKYVQLNHQKTHHHLYLNFKKVAIVNEKVKSPTIENGGEEKPPKKLAIGVEGGFNVEDEEIKYEEHYKLYIFPDDKFLELSDPIIPENVRVCCEKIKTLNSQSRKEEIVSWNAESVFPSAFAESIIQLDNNTKKIDPKGPWRCDIEGCDKVENLWLNLTDGFIGCGRKYADGTGGNGHAQEHFNQTQYPISVKLGTITKDHADVYSYPEDDMVSDPLLFQHLTHWGLNPNVMVKTEKSMAELELDQNLNFEFGKIQEKGKLLENVFGPGLTGIENLGNSCYMSSVIQMIFAIDSFQTRYLKDREASFKDITQDPTQSFEIQMSKLAHGLLSGDYSIPLSKPSKNANEESEAATQIGIAPKMFKSLIGASHAEFSTMKQQDAHEYLQYLLEYIERAEHSRPSWIQQANPTRLFQFHNEDRIECGSSGQVKYTRRLENILSVPVNLDDATNKQEVAQYEETLKQQNGVRQKDQEEIRPIIPLVSCINGFVEPYRVEDFLSPATGVKTFSLNSSRMATFPEVLIIHLKKYTYNADYTPKKLNVFMDVPDIIDIDSLRGRGIKEGEVPLKEGTINTTTKVPEPSFNQEVLDTLLSMDFPLVRCKKALLATGGKDAELAMNWIFEHTEDPDIDIEQTPVNNNNNNNNSSNSNDKLFVFNSQDVDNIIGMGFTDSQAKLALKNTKGNLERAADWLFSHIDNLDELVAKDNASTSSINPSLIPQSTTSLQPVSDGVGKYELLGFISHLGNNVTCGHYVCHIKKNNRWIKFNDRHVQLSEQPPKELGYIYFYKRQLN</sequence>